<gene>
    <name evidence="1" type="primary">rpmD</name>
    <name type="ordered locus">DP1143</name>
</gene>
<comment type="subunit">
    <text evidence="1">Part of the 50S ribosomal subunit.</text>
</comment>
<comment type="similarity">
    <text evidence="1">Belongs to the universal ribosomal protein uL30 family.</text>
</comment>
<reference key="1">
    <citation type="journal article" date="2004" name="Environ. Microbiol.">
        <title>The genome of Desulfotalea psychrophila, a sulfate-reducing bacterium from permanently cold Arctic sediments.</title>
        <authorList>
            <person name="Rabus R."/>
            <person name="Ruepp A."/>
            <person name="Frickey T."/>
            <person name="Rattei T."/>
            <person name="Fartmann B."/>
            <person name="Stark M."/>
            <person name="Bauer M."/>
            <person name="Zibat A."/>
            <person name="Lombardot T."/>
            <person name="Becker I."/>
            <person name="Amann J."/>
            <person name="Gellner K."/>
            <person name="Teeling H."/>
            <person name="Leuschner W.D."/>
            <person name="Gloeckner F.-O."/>
            <person name="Lupas A.N."/>
            <person name="Amann R."/>
            <person name="Klenk H.-P."/>
        </authorList>
    </citation>
    <scope>NUCLEOTIDE SEQUENCE [LARGE SCALE GENOMIC DNA]</scope>
    <source>
        <strain>DSM 12343 / LSv54</strain>
    </source>
</reference>
<sequence>MTETITFTLVKSGIGSTDKIRATLTGLGLTKLNKTVTRKDTPEIRGMLNKVKHLVRIDEA</sequence>
<organism>
    <name type="scientific">Desulfotalea psychrophila (strain LSv54 / DSM 12343)</name>
    <dbReference type="NCBI Taxonomy" id="177439"/>
    <lineage>
        <taxon>Bacteria</taxon>
        <taxon>Pseudomonadati</taxon>
        <taxon>Thermodesulfobacteriota</taxon>
        <taxon>Desulfobulbia</taxon>
        <taxon>Desulfobulbales</taxon>
        <taxon>Desulfocapsaceae</taxon>
        <taxon>Desulfotalea</taxon>
    </lineage>
</organism>
<accession>Q6AP52</accession>
<name>RL30_DESPS</name>
<evidence type="ECO:0000255" key="1">
    <source>
        <dbReference type="HAMAP-Rule" id="MF_01371"/>
    </source>
</evidence>
<evidence type="ECO:0000305" key="2"/>
<keyword id="KW-1185">Reference proteome</keyword>
<keyword id="KW-0687">Ribonucleoprotein</keyword>
<keyword id="KW-0689">Ribosomal protein</keyword>
<protein>
    <recommendedName>
        <fullName evidence="1">Large ribosomal subunit protein uL30</fullName>
    </recommendedName>
    <alternativeName>
        <fullName evidence="2">50S ribosomal protein L30</fullName>
    </alternativeName>
</protein>
<feature type="chain" id="PRO_0000273780" description="Large ribosomal subunit protein uL30">
    <location>
        <begin position="1"/>
        <end position="60"/>
    </location>
</feature>
<proteinExistence type="inferred from homology"/>
<dbReference type="EMBL" id="CR522870">
    <property type="protein sequence ID" value="CAG35872.1"/>
    <property type="molecule type" value="Genomic_DNA"/>
</dbReference>
<dbReference type="RefSeq" id="WP_011188384.1">
    <property type="nucleotide sequence ID" value="NC_006138.1"/>
</dbReference>
<dbReference type="SMR" id="Q6AP52"/>
<dbReference type="STRING" id="177439.DP1143"/>
<dbReference type="KEGG" id="dps:DP1143"/>
<dbReference type="eggNOG" id="COG1841">
    <property type="taxonomic scope" value="Bacteria"/>
</dbReference>
<dbReference type="HOGENOM" id="CLU_131047_2_1_7"/>
<dbReference type="Proteomes" id="UP000000602">
    <property type="component" value="Chromosome"/>
</dbReference>
<dbReference type="GO" id="GO:0022625">
    <property type="term" value="C:cytosolic large ribosomal subunit"/>
    <property type="evidence" value="ECO:0007669"/>
    <property type="project" value="TreeGrafter"/>
</dbReference>
<dbReference type="GO" id="GO:0003735">
    <property type="term" value="F:structural constituent of ribosome"/>
    <property type="evidence" value="ECO:0007669"/>
    <property type="project" value="InterPro"/>
</dbReference>
<dbReference type="GO" id="GO:0006412">
    <property type="term" value="P:translation"/>
    <property type="evidence" value="ECO:0007669"/>
    <property type="project" value="InterPro"/>
</dbReference>
<dbReference type="CDD" id="cd01658">
    <property type="entry name" value="Ribosomal_L30"/>
    <property type="match status" value="1"/>
</dbReference>
<dbReference type="Gene3D" id="3.30.1390.20">
    <property type="entry name" value="Ribosomal protein L30, ferredoxin-like fold domain"/>
    <property type="match status" value="1"/>
</dbReference>
<dbReference type="HAMAP" id="MF_01371_B">
    <property type="entry name" value="Ribosomal_uL30_B"/>
    <property type="match status" value="1"/>
</dbReference>
<dbReference type="InterPro" id="IPR036919">
    <property type="entry name" value="Ribo_uL30_ferredoxin-like_sf"/>
</dbReference>
<dbReference type="InterPro" id="IPR005996">
    <property type="entry name" value="Ribosomal_uL30_bac-type"/>
</dbReference>
<dbReference type="InterPro" id="IPR016082">
    <property type="entry name" value="Ribosomal_uL30_ferredoxin-like"/>
</dbReference>
<dbReference type="NCBIfam" id="TIGR01308">
    <property type="entry name" value="rpmD_bact"/>
    <property type="match status" value="1"/>
</dbReference>
<dbReference type="PANTHER" id="PTHR15892:SF2">
    <property type="entry name" value="LARGE RIBOSOMAL SUBUNIT PROTEIN UL30M"/>
    <property type="match status" value="1"/>
</dbReference>
<dbReference type="PANTHER" id="PTHR15892">
    <property type="entry name" value="MITOCHONDRIAL RIBOSOMAL PROTEIN L30"/>
    <property type="match status" value="1"/>
</dbReference>
<dbReference type="Pfam" id="PF00327">
    <property type="entry name" value="Ribosomal_L30"/>
    <property type="match status" value="1"/>
</dbReference>
<dbReference type="PIRSF" id="PIRSF002211">
    <property type="entry name" value="Ribosomal_L30_bac-type"/>
    <property type="match status" value="1"/>
</dbReference>
<dbReference type="SUPFAM" id="SSF55129">
    <property type="entry name" value="Ribosomal protein L30p/L7e"/>
    <property type="match status" value="1"/>
</dbReference>